<proteinExistence type="inferred from homology"/>
<dbReference type="EMBL" id="AF453823">
    <property type="protein sequence ID" value="AAM21588.1"/>
    <property type="molecule type" value="Genomic_DNA"/>
</dbReference>
<dbReference type="SMR" id="P58826"/>
<dbReference type="GlyCosmos" id="P58826">
    <property type="glycosylation" value="1 site, No reported glycans"/>
</dbReference>
<dbReference type="PaxDb" id="10029-XP_007626248.1"/>
<dbReference type="eggNOG" id="ENOG502QSTF">
    <property type="taxonomic scope" value="Eukaryota"/>
</dbReference>
<dbReference type="Proteomes" id="UP000694386">
    <property type="component" value="Unplaced"/>
</dbReference>
<dbReference type="Proteomes" id="UP001108280">
    <property type="component" value="Unplaced"/>
</dbReference>
<dbReference type="GO" id="GO:0005886">
    <property type="term" value="C:plasma membrane"/>
    <property type="evidence" value="ECO:0007669"/>
    <property type="project" value="UniProtKB-SubCell"/>
</dbReference>
<dbReference type="GO" id="GO:0045028">
    <property type="term" value="F:G protein-coupled purinergic nucleotide receptor activity"/>
    <property type="evidence" value="ECO:0007669"/>
    <property type="project" value="InterPro"/>
</dbReference>
<dbReference type="GO" id="GO:0045030">
    <property type="term" value="F:G protein-coupled UTP receptor activity"/>
    <property type="evidence" value="ECO:0007669"/>
    <property type="project" value="TreeGrafter"/>
</dbReference>
<dbReference type="GO" id="GO:0030321">
    <property type="term" value="P:transepithelial chloride transport"/>
    <property type="evidence" value="ECO:0007669"/>
    <property type="project" value="InterPro"/>
</dbReference>
<dbReference type="Gene3D" id="1.20.1070.10">
    <property type="entry name" value="Rhodopsin 7-helix transmembrane proteins"/>
    <property type="match status" value="1"/>
</dbReference>
<dbReference type="InterPro" id="IPR000276">
    <property type="entry name" value="GPCR_Rhodpsn"/>
</dbReference>
<dbReference type="InterPro" id="IPR017452">
    <property type="entry name" value="GPCR_Rhodpsn_7TM"/>
</dbReference>
<dbReference type="InterPro" id="IPR000018">
    <property type="entry name" value="P2Y4"/>
</dbReference>
<dbReference type="PANTHER" id="PTHR24231:SF21">
    <property type="entry name" value="P2Y PURINOCEPTOR 4"/>
    <property type="match status" value="1"/>
</dbReference>
<dbReference type="PANTHER" id="PTHR24231">
    <property type="entry name" value="PURINOCEPTOR-RELATED G-PROTEIN COUPLED RECEPTOR"/>
    <property type="match status" value="1"/>
</dbReference>
<dbReference type="Pfam" id="PF00001">
    <property type="entry name" value="7tm_1"/>
    <property type="match status" value="1"/>
</dbReference>
<dbReference type="PRINTS" id="PR00237">
    <property type="entry name" value="GPCRRHODOPSN"/>
</dbReference>
<dbReference type="PRINTS" id="PR01066">
    <property type="entry name" value="P2Y4PRNOCPTR"/>
</dbReference>
<dbReference type="PRINTS" id="PR01157">
    <property type="entry name" value="P2YPURNOCPTR"/>
</dbReference>
<dbReference type="SUPFAM" id="SSF81321">
    <property type="entry name" value="Family A G protein-coupled receptor-like"/>
    <property type="match status" value="1"/>
</dbReference>
<dbReference type="PROSITE" id="PS00237">
    <property type="entry name" value="G_PROTEIN_RECEP_F1_1"/>
    <property type="match status" value="1"/>
</dbReference>
<dbReference type="PROSITE" id="PS50262">
    <property type="entry name" value="G_PROTEIN_RECEP_F1_2"/>
    <property type="match status" value="1"/>
</dbReference>
<sequence>SDTLYVLSLPTLVYYYAARNHWPFGTGFCKFVRFLFYWNLYCSVLFLTCISVHRYMGICHPLRALRWGRPRFASLLCLAVWLVVAGCLVPNLFFVTTSPNGTTILCHDTTRPEEFDHYVHFSSAVMVLLFGLPFLVTLVCYGLMARRLYRPLPGAGQSSSRLRSL</sequence>
<name>P2RY4_CRIGR</name>
<accession>P58826</accession>
<gene>
    <name type="primary">P2RY4</name>
</gene>
<reference key="1">
    <citation type="submission" date="2001-11" db="EMBL/GenBank/DDBJ databases">
        <title>Molecular and functional characterization of P2Y1 and P2Y2 purinergic receptors in CHO-k1 cells.</title>
        <authorList>
            <person name="Marcet B."/>
            <person name="Verrier B."/>
        </authorList>
    </citation>
    <scope>NUCLEOTIDE SEQUENCE [GENOMIC DNA]</scope>
</reference>
<organism>
    <name type="scientific">Cricetulus griseus</name>
    <name type="common">Chinese hamster</name>
    <name type="synonym">Cricetulus barabensis griseus</name>
    <dbReference type="NCBI Taxonomy" id="10029"/>
    <lineage>
        <taxon>Eukaryota</taxon>
        <taxon>Metazoa</taxon>
        <taxon>Chordata</taxon>
        <taxon>Craniata</taxon>
        <taxon>Vertebrata</taxon>
        <taxon>Euteleostomi</taxon>
        <taxon>Mammalia</taxon>
        <taxon>Eutheria</taxon>
        <taxon>Euarchontoglires</taxon>
        <taxon>Glires</taxon>
        <taxon>Rodentia</taxon>
        <taxon>Myomorpha</taxon>
        <taxon>Muroidea</taxon>
        <taxon>Cricetidae</taxon>
        <taxon>Cricetinae</taxon>
        <taxon>Cricetulus</taxon>
    </lineage>
</organism>
<comment type="function">
    <text evidence="1">Receptor for UTP and UDP coupled to G-proteins that activate a phosphatidylinositol-calcium second messenger system.</text>
</comment>
<comment type="subcellular location">
    <subcellularLocation>
        <location>Cell membrane</location>
        <topology>Multi-pass membrane protein</topology>
    </subcellularLocation>
</comment>
<comment type="similarity">
    <text evidence="3">Belongs to the G-protein coupled receptor 1 family.</text>
</comment>
<protein>
    <recommendedName>
        <fullName>P2Y purinoceptor 4</fullName>
        <shortName>P2Y4</shortName>
    </recommendedName>
    <alternativeName>
        <fullName>P2Y4 metabotropic purinergic receptor</fullName>
    </alternativeName>
</protein>
<keyword id="KW-1003">Cell membrane</keyword>
<keyword id="KW-0297">G-protein coupled receptor</keyword>
<keyword id="KW-0325">Glycoprotein</keyword>
<keyword id="KW-0472">Membrane</keyword>
<keyword id="KW-0675">Receptor</keyword>
<keyword id="KW-0807">Transducer</keyword>
<keyword id="KW-0812">Transmembrane</keyword>
<keyword id="KW-1133">Transmembrane helix</keyword>
<feature type="chain" id="PRO_0000070019" description="P2Y purinoceptor 4">
    <location>
        <begin position="1" status="less than"/>
        <end position="165" status="greater than"/>
    </location>
</feature>
<feature type="transmembrane region" description="Helical; Name=2" evidence="2">
    <location>
        <begin position="1" status="less than"/>
        <end position="16"/>
    </location>
</feature>
<feature type="topological domain" description="Extracellular" evidence="2">
    <location>
        <begin position="17"/>
        <end position="30"/>
    </location>
</feature>
<feature type="transmembrane region" description="Helical; Name=3" evidence="2">
    <location>
        <begin position="31"/>
        <end position="51"/>
    </location>
</feature>
<feature type="topological domain" description="Cytoplasmic" evidence="2">
    <location>
        <begin position="52"/>
        <end position="74"/>
    </location>
</feature>
<feature type="transmembrane region" description="Helical; Name=4" evidence="2">
    <location>
        <begin position="75"/>
        <end position="95"/>
    </location>
</feature>
<feature type="topological domain" description="Extracellular" evidence="2">
    <location>
        <begin position="96"/>
        <end position="124"/>
    </location>
</feature>
<feature type="transmembrane region" description="Helical; Name=5" evidence="2">
    <location>
        <begin position="125"/>
        <end position="145"/>
    </location>
</feature>
<feature type="topological domain" description="Cytoplasmic" evidence="2">
    <location>
        <begin position="146"/>
        <end position="165" status="greater than"/>
    </location>
</feature>
<feature type="glycosylation site" description="N-linked (GlcNAc...) asparagine" evidence="2">
    <location>
        <position position="100"/>
    </location>
</feature>
<feature type="non-terminal residue">
    <location>
        <position position="1"/>
    </location>
</feature>
<feature type="non-terminal residue">
    <location>
        <position position="165"/>
    </location>
</feature>
<evidence type="ECO:0000250" key="1"/>
<evidence type="ECO:0000255" key="2"/>
<evidence type="ECO:0000255" key="3">
    <source>
        <dbReference type="PROSITE-ProRule" id="PRU00521"/>
    </source>
</evidence>